<dbReference type="EC" id="2.7.4.25" evidence="1"/>
<dbReference type="EMBL" id="FM180568">
    <property type="protein sequence ID" value="CAS08451.1"/>
    <property type="molecule type" value="Genomic_DNA"/>
</dbReference>
<dbReference type="RefSeq" id="WP_000125016.1">
    <property type="nucleotide sequence ID" value="NC_011601.1"/>
</dbReference>
<dbReference type="SMR" id="B7UMZ6"/>
<dbReference type="GeneID" id="93776507"/>
<dbReference type="KEGG" id="ecg:E2348C_0903"/>
<dbReference type="HOGENOM" id="CLU_079959_0_2_6"/>
<dbReference type="Proteomes" id="UP000008205">
    <property type="component" value="Chromosome"/>
</dbReference>
<dbReference type="GO" id="GO:0005829">
    <property type="term" value="C:cytosol"/>
    <property type="evidence" value="ECO:0007669"/>
    <property type="project" value="TreeGrafter"/>
</dbReference>
<dbReference type="GO" id="GO:0005524">
    <property type="term" value="F:ATP binding"/>
    <property type="evidence" value="ECO:0007669"/>
    <property type="project" value="UniProtKB-UniRule"/>
</dbReference>
<dbReference type="GO" id="GO:0036430">
    <property type="term" value="F:CMP kinase activity"/>
    <property type="evidence" value="ECO:0007669"/>
    <property type="project" value="RHEA"/>
</dbReference>
<dbReference type="GO" id="GO:0036431">
    <property type="term" value="F:dCMP kinase activity"/>
    <property type="evidence" value="ECO:0007669"/>
    <property type="project" value="RHEA"/>
</dbReference>
<dbReference type="GO" id="GO:0015949">
    <property type="term" value="P:nucleobase-containing small molecule interconversion"/>
    <property type="evidence" value="ECO:0007669"/>
    <property type="project" value="TreeGrafter"/>
</dbReference>
<dbReference type="GO" id="GO:0006220">
    <property type="term" value="P:pyrimidine nucleotide metabolic process"/>
    <property type="evidence" value="ECO:0007669"/>
    <property type="project" value="UniProtKB-UniRule"/>
</dbReference>
<dbReference type="CDD" id="cd02020">
    <property type="entry name" value="CMPK"/>
    <property type="match status" value="1"/>
</dbReference>
<dbReference type="FunFam" id="3.40.50.300:FF:000262">
    <property type="entry name" value="Cytidylate kinase"/>
    <property type="match status" value="1"/>
</dbReference>
<dbReference type="Gene3D" id="3.40.50.300">
    <property type="entry name" value="P-loop containing nucleotide triphosphate hydrolases"/>
    <property type="match status" value="1"/>
</dbReference>
<dbReference type="HAMAP" id="MF_00238">
    <property type="entry name" value="Cytidyl_kinase_type1"/>
    <property type="match status" value="1"/>
</dbReference>
<dbReference type="InterPro" id="IPR003136">
    <property type="entry name" value="Cytidylate_kin"/>
</dbReference>
<dbReference type="InterPro" id="IPR011994">
    <property type="entry name" value="Cytidylate_kinase_dom"/>
</dbReference>
<dbReference type="InterPro" id="IPR027417">
    <property type="entry name" value="P-loop_NTPase"/>
</dbReference>
<dbReference type="NCBIfam" id="TIGR00017">
    <property type="entry name" value="cmk"/>
    <property type="match status" value="1"/>
</dbReference>
<dbReference type="PANTHER" id="PTHR21299:SF2">
    <property type="entry name" value="CYTIDYLATE KINASE"/>
    <property type="match status" value="1"/>
</dbReference>
<dbReference type="PANTHER" id="PTHR21299">
    <property type="entry name" value="CYTIDYLATE KINASE/PANTOATE-BETA-ALANINE LIGASE"/>
    <property type="match status" value="1"/>
</dbReference>
<dbReference type="Pfam" id="PF02224">
    <property type="entry name" value="Cytidylate_kin"/>
    <property type="match status" value="1"/>
</dbReference>
<dbReference type="SUPFAM" id="SSF52540">
    <property type="entry name" value="P-loop containing nucleoside triphosphate hydrolases"/>
    <property type="match status" value="1"/>
</dbReference>
<sequence length="227" mass="24746">MTAIAPVITIDGPSGAGKGTLCKAMAEALQWHLLDSGAIYRVLALAALHHHVDVASEDALVPLASHLDVRFVSTNGNLEVILEGEDVSGEIRTQEVANAASQVAAFPRVREALLRRQRAFRELPGLIADGRDMGTVVFPDAPVKIFLDASSEERAHRRMLQLQEKGFSVNFERLLAEIKERDDRDRNRAVAPLVPAADALVLDSTTLSIEQVIEKALQYARQKLALA</sequence>
<gene>
    <name evidence="1" type="primary">cmk</name>
    <name type="ordered locus">E2348C_0903</name>
</gene>
<keyword id="KW-0067">ATP-binding</keyword>
<keyword id="KW-0963">Cytoplasm</keyword>
<keyword id="KW-0418">Kinase</keyword>
<keyword id="KW-0547">Nucleotide-binding</keyword>
<keyword id="KW-1185">Reference proteome</keyword>
<keyword id="KW-0808">Transferase</keyword>
<evidence type="ECO:0000255" key="1">
    <source>
        <dbReference type="HAMAP-Rule" id="MF_00238"/>
    </source>
</evidence>
<accession>B7UMZ6</accession>
<reference key="1">
    <citation type="journal article" date="2009" name="J. Bacteriol.">
        <title>Complete genome sequence and comparative genome analysis of enteropathogenic Escherichia coli O127:H6 strain E2348/69.</title>
        <authorList>
            <person name="Iguchi A."/>
            <person name="Thomson N.R."/>
            <person name="Ogura Y."/>
            <person name="Saunders D."/>
            <person name="Ooka T."/>
            <person name="Henderson I.R."/>
            <person name="Harris D."/>
            <person name="Asadulghani M."/>
            <person name="Kurokawa K."/>
            <person name="Dean P."/>
            <person name="Kenny B."/>
            <person name="Quail M.A."/>
            <person name="Thurston S."/>
            <person name="Dougan G."/>
            <person name="Hayashi T."/>
            <person name="Parkhill J."/>
            <person name="Frankel G."/>
        </authorList>
    </citation>
    <scope>NUCLEOTIDE SEQUENCE [LARGE SCALE GENOMIC DNA]</scope>
    <source>
        <strain>E2348/69 / EPEC</strain>
    </source>
</reference>
<organism>
    <name type="scientific">Escherichia coli O127:H6 (strain E2348/69 / EPEC)</name>
    <dbReference type="NCBI Taxonomy" id="574521"/>
    <lineage>
        <taxon>Bacteria</taxon>
        <taxon>Pseudomonadati</taxon>
        <taxon>Pseudomonadota</taxon>
        <taxon>Gammaproteobacteria</taxon>
        <taxon>Enterobacterales</taxon>
        <taxon>Enterobacteriaceae</taxon>
        <taxon>Escherichia</taxon>
    </lineage>
</organism>
<proteinExistence type="inferred from homology"/>
<protein>
    <recommendedName>
        <fullName evidence="1">Cytidylate kinase</fullName>
        <shortName evidence="1">CK</shortName>
        <ecNumber evidence="1">2.7.4.25</ecNumber>
    </recommendedName>
    <alternativeName>
        <fullName evidence="1">Cytidine monophosphate kinase</fullName>
        <shortName evidence="1">CMP kinase</shortName>
    </alternativeName>
</protein>
<feature type="chain" id="PRO_1000125285" description="Cytidylate kinase">
    <location>
        <begin position="1"/>
        <end position="227"/>
    </location>
</feature>
<feature type="binding site" evidence="1">
    <location>
        <begin position="12"/>
        <end position="20"/>
    </location>
    <ligand>
        <name>ATP</name>
        <dbReference type="ChEBI" id="CHEBI:30616"/>
    </ligand>
</feature>
<name>KCY_ECO27</name>
<comment type="catalytic activity">
    <reaction evidence="1">
        <text>CMP + ATP = CDP + ADP</text>
        <dbReference type="Rhea" id="RHEA:11600"/>
        <dbReference type="ChEBI" id="CHEBI:30616"/>
        <dbReference type="ChEBI" id="CHEBI:58069"/>
        <dbReference type="ChEBI" id="CHEBI:60377"/>
        <dbReference type="ChEBI" id="CHEBI:456216"/>
        <dbReference type="EC" id="2.7.4.25"/>
    </reaction>
</comment>
<comment type="catalytic activity">
    <reaction evidence="1">
        <text>dCMP + ATP = dCDP + ADP</text>
        <dbReference type="Rhea" id="RHEA:25094"/>
        <dbReference type="ChEBI" id="CHEBI:30616"/>
        <dbReference type="ChEBI" id="CHEBI:57566"/>
        <dbReference type="ChEBI" id="CHEBI:58593"/>
        <dbReference type="ChEBI" id="CHEBI:456216"/>
        <dbReference type="EC" id="2.7.4.25"/>
    </reaction>
</comment>
<comment type="subcellular location">
    <subcellularLocation>
        <location evidence="1">Cytoplasm</location>
    </subcellularLocation>
</comment>
<comment type="similarity">
    <text evidence="1">Belongs to the cytidylate kinase family. Type 1 subfamily.</text>
</comment>